<accession>C0RJK2</accession>
<feature type="chain" id="PRO_1000196292" description="Small ribosomal subunit protein uS10">
    <location>
        <begin position="1"/>
        <end position="102"/>
    </location>
</feature>
<protein>
    <recommendedName>
        <fullName evidence="1">Small ribosomal subunit protein uS10</fullName>
    </recommendedName>
    <alternativeName>
        <fullName evidence="2">30S ribosomal protein S10</fullName>
    </alternativeName>
</protein>
<keyword id="KW-0687">Ribonucleoprotein</keyword>
<keyword id="KW-0689">Ribosomal protein</keyword>
<sequence length="102" mass="11628">MNGQNIRIRLKAFDHRILDASTREIVSTAKRTGANVRGPIPLPTRIEKFTVNRSPHIDKKSREQFEMRTHKRLLDIVDPTPQTVDALMKLDLSAGVDVEIKL</sequence>
<reference key="1">
    <citation type="submission" date="2009-03" db="EMBL/GenBank/DDBJ databases">
        <title>Brucella melitensis ATCC 23457 whole genome shotgun sequencing project.</title>
        <authorList>
            <person name="Setubal J.C."/>
            <person name="Boyle S."/>
            <person name="Crasta O.R."/>
            <person name="Gillespie J.J."/>
            <person name="Kenyon R.W."/>
            <person name="Lu J."/>
            <person name="Mane S."/>
            <person name="Nagrani S."/>
            <person name="Shallom J.M."/>
            <person name="Shallom S."/>
            <person name="Shukla M."/>
            <person name="Snyder E.E."/>
            <person name="Sobral B.W."/>
            <person name="Wattam A.R."/>
            <person name="Will R."/>
            <person name="Williams K."/>
            <person name="Yoo H."/>
            <person name="Munk C."/>
            <person name="Tapia R."/>
            <person name="Han C."/>
            <person name="Detter J.C."/>
            <person name="Bruce D."/>
            <person name="Brettin T.S."/>
        </authorList>
    </citation>
    <scope>NUCLEOTIDE SEQUENCE [LARGE SCALE GENOMIC DNA]</scope>
    <source>
        <strain>ATCC 23457</strain>
    </source>
</reference>
<proteinExistence type="inferred from homology"/>
<name>RS10_BRUMB</name>
<evidence type="ECO:0000255" key="1">
    <source>
        <dbReference type="HAMAP-Rule" id="MF_00508"/>
    </source>
</evidence>
<evidence type="ECO:0000305" key="2"/>
<comment type="function">
    <text evidence="1">Involved in the binding of tRNA to the ribosomes.</text>
</comment>
<comment type="subunit">
    <text evidence="1">Part of the 30S ribosomal subunit.</text>
</comment>
<comment type="similarity">
    <text evidence="1">Belongs to the universal ribosomal protein uS10 family.</text>
</comment>
<gene>
    <name evidence="1" type="primary">rpsJ</name>
    <name type="ordered locus">BMEA_A1279</name>
</gene>
<organism>
    <name type="scientific">Brucella melitensis biotype 2 (strain ATCC 23457)</name>
    <dbReference type="NCBI Taxonomy" id="546272"/>
    <lineage>
        <taxon>Bacteria</taxon>
        <taxon>Pseudomonadati</taxon>
        <taxon>Pseudomonadota</taxon>
        <taxon>Alphaproteobacteria</taxon>
        <taxon>Hyphomicrobiales</taxon>
        <taxon>Brucellaceae</taxon>
        <taxon>Brucella/Ochrobactrum group</taxon>
        <taxon>Brucella</taxon>
    </lineage>
</organism>
<dbReference type="EMBL" id="CP001488">
    <property type="protein sequence ID" value="ACO01010.1"/>
    <property type="molecule type" value="Genomic_DNA"/>
</dbReference>
<dbReference type="RefSeq" id="WP_002964363.1">
    <property type="nucleotide sequence ID" value="NC_012441.1"/>
</dbReference>
<dbReference type="SMR" id="C0RJK2"/>
<dbReference type="GeneID" id="97533523"/>
<dbReference type="KEGG" id="bmi:BMEA_A1279"/>
<dbReference type="HOGENOM" id="CLU_122625_1_3_5"/>
<dbReference type="Proteomes" id="UP000001748">
    <property type="component" value="Chromosome I"/>
</dbReference>
<dbReference type="GO" id="GO:1990904">
    <property type="term" value="C:ribonucleoprotein complex"/>
    <property type="evidence" value="ECO:0007669"/>
    <property type="project" value="UniProtKB-KW"/>
</dbReference>
<dbReference type="GO" id="GO:0005840">
    <property type="term" value="C:ribosome"/>
    <property type="evidence" value="ECO:0007669"/>
    <property type="project" value="UniProtKB-KW"/>
</dbReference>
<dbReference type="GO" id="GO:0003735">
    <property type="term" value="F:structural constituent of ribosome"/>
    <property type="evidence" value="ECO:0007669"/>
    <property type="project" value="InterPro"/>
</dbReference>
<dbReference type="GO" id="GO:0000049">
    <property type="term" value="F:tRNA binding"/>
    <property type="evidence" value="ECO:0007669"/>
    <property type="project" value="UniProtKB-UniRule"/>
</dbReference>
<dbReference type="GO" id="GO:0006412">
    <property type="term" value="P:translation"/>
    <property type="evidence" value="ECO:0007669"/>
    <property type="project" value="UniProtKB-UniRule"/>
</dbReference>
<dbReference type="FunFam" id="3.30.70.600:FF:000001">
    <property type="entry name" value="30S ribosomal protein S10"/>
    <property type="match status" value="1"/>
</dbReference>
<dbReference type="Gene3D" id="3.30.70.600">
    <property type="entry name" value="Ribosomal protein S10 domain"/>
    <property type="match status" value="1"/>
</dbReference>
<dbReference type="HAMAP" id="MF_00508">
    <property type="entry name" value="Ribosomal_uS10"/>
    <property type="match status" value="1"/>
</dbReference>
<dbReference type="InterPro" id="IPR001848">
    <property type="entry name" value="Ribosomal_uS10"/>
</dbReference>
<dbReference type="InterPro" id="IPR018268">
    <property type="entry name" value="Ribosomal_uS10_CS"/>
</dbReference>
<dbReference type="InterPro" id="IPR027486">
    <property type="entry name" value="Ribosomal_uS10_dom"/>
</dbReference>
<dbReference type="InterPro" id="IPR036838">
    <property type="entry name" value="Ribosomal_uS10_dom_sf"/>
</dbReference>
<dbReference type="NCBIfam" id="NF001861">
    <property type="entry name" value="PRK00596.1"/>
    <property type="match status" value="1"/>
</dbReference>
<dbReference type="NCBIfam" id="TIGR01049">
    <property type="entry name" value="rpsJ_bact"/>
    <property type="match status" value="1"/>
</dbReference>
<dbReference type="PANTHER" id="PTHR11700">
    <property type="entry name" value="30S RIBOSOMAL PROTEIN S10 FAMILY MEMBER"/>
    <property type="match status" value="1"/>
</dbReference>
<dbReference type="Pfam" id="PF00338">
    <property type="entry name" value="Ribosomal_S10"/>
    <property type="match status" value="1"/>
</dbReference>
<dbReference type="PRINTS" id="PR00971">
    <property type="entry name" value="RIBOSOMALS10"/>
</dbReference>
<dbReference type="SMART" id="SM01403">
    <property type="entry name" value="Ribosomal_S10"/>
    <property type="match status" value="1"/>
</dbReference>
<dbReference type="SUPFAM" id="SSF54999">
    <property type="entry name" value="Ribosomal protein S10"/>
    <property type="match status" value="1"/>
</dbReference>
<dbReference type="PROSITE" id="PS00361">
    <property type="entry name" value="RIBOSOMAL_S10"/>
    <property type="match status" value="1"/>
</dbReference>